<comment type="function">
    <text evidence="1 8 9 11">Postsynaptic adhesion molecule that binds to presynaptic neurexins to mediate synapse formation, and which is involved in learning and memory (PubMed:24613359, PubMed:26171716, PubMed:31529526). Promotes synapse development by acting as a cell adhesion molecule at the postsynaptic membrane, which associates with neurexin-alpha at the presynaptic membrane (By similarity).</text>
</comment>
<comment type="subcellular location">
    <subcellularLocation>
        <location evidence="7 8">Postsynaptic cell membrane</location>
        <topology evidence="4">Single-pass type I membrane protein</topology>
    </subcellularLocation>
    <subcellularLocation>
        <location evidence="7">Endoplasmic reticulum membrane</location>
        <topology evidence="4">Single-pass type I membrane protein</topology>
    </subcellularLocation>
    <subcellularLocation>
        <location evidence="7">Golgi apparatus membrane</location>
        <topology evidence="4">Single-pass type I membrane protein</topology>
    </subcellularLocation>
    <subcellularLocation>
        <location evidence="7">Cell projection</location>
        <location evidence="7">Dendrite</location>
    </subcellularLocation>
    <text evidence="7">Most prominent in the postsynaptic specializations of asymmetric (type I) synapses with both axodendritic and axospinous localization.</text>
</comment>
<comment type="alternative products">
    <event type="alternative splicing"/>
    <isoform>
        <id>Q9ER65-1</id>
        <name>1</name>
        <sequence type="displayed"/>
    </isoform>
    <isoform>
        <id>Q9ER65-2</id>
        <name>2</name>
        <sequence type="described" ref="VSP_032037"/>
    </isoform>
</comment>
<comment type="tissue specificity">
    <text evidence="7">Restricted to the brain (PubMed:12498782). In the cerebral cortex, found in the somas and neuropil of all layers (PubMed:12498782). Expressed at highest levels in neurons of cortical layers 5 and 6 and, at lower levels, in neurons of the upper layers (PubMed:12498782). Highly expressed in Purkinje cells (PubMed:12498782). Also found in a few scattered interneurons throughout the granule cell layer and occasionally in neurons in the molecular layer (at protein level) (PubMed:12498782). Present throughout all cortical layers, highest levels in GABAergic neurons (based on morphology and distribution pattern) (PubMed:12498782).</text>
</comment>
<comment type="domain">
    <text evidence="2">Binds synaptic Ca(2+) with its cytoplasmic domain.</text>
</comment>
<comment type="PTM">
    <text evidence="3">Proteolytically processed under normal cellular conditions. A primary zeta-cleavage generates a large extracellular (soluble) N-terminal domain (sAlc) and a short C-terminal transmembrane fragment (CTF1). A secondary cleavage catalyzed by gamma-secretase within the transmembrane domain releases the beta-Alc-gamma chain in the extracellular milieu and produces an intracellular fragment (AlcICD). This processing is strongly suppressed in the tripartite complex formed with APBA2 and APP, which seems to prevent the association with PSEN1.</text>
</comment>
<comment type="disruption phenotype">
    <text evidence="9 10 11 12">Mice show a deficit of GABAergic interneurons, associated with hyperactivity, deficient spatial memory and social behavior (PubMed:26171716, PubMed:28647593). Mice show a selective reduction in functional inhibitory synapses, associated with a selective reduction of parvalbumin interneurons in hippocampus and cortex (PubMed:26171716). In neurons, a reduction of symmetric (inhibitory) synaptic density, length of synaptic contacts and postsynaptic density is observed (PubMed:31529526). Moreover, cortical neurons are characterized by the predominance of the simplified type of synapses with the emergence of negative curvature of the synaptic zone (PubMed:31529526). Presynaptic zones of cortical neurons show an increased number of synaptic vesicles in opposite to the decreased number of synaptic vesicles in the presynaptic zones of hippocampal neurons (PubMed:31529526). Mice lacking Clstn1, Clstn2 and Clstn3 display behavior disorders, characterized by hyperactivity in normal environment, hypersensitivity to stress, and show tendency to freeze in novel environments (PubMed:35279170).</text>
</comment>
<comment type="similarity">
    <text evidence="17">Belongs to the calsyntenin family.</text>
</comment>
<comment type="sequence caution" evidence="17">
    <conflict type="erroneous initiation">
        <sequence resource="EMBL-CDS" id="BAD90297"/>
    </conflict>
</comment>
<sequence>MLPGRLCLVPLLLALGVGSGGGSGDGGDSRRRRLLVAKVNKHKPWIETSYHGVITENNDTVILDPPLVALDKDAPVPFAGEICAFKIHGQELPFEAVVLNKTSGEGRLRAKSPIDCELQKEYTFIIQAYDCGAGPREAAWKKSHKAVVHIQVKDVNEFAPTFKEPAYKAIVTEGKIYDSILQVEAIDEDCSPQYSQICNYEIVTTDVPFAIDRNGNIRNTEKLSYDKQHQYEILVTAYDCGQKPAAQDTLVQVDVKPVCKPGWQDWTKRIEYQPGSGSMPLFPSIHLETCDGAVSSLQVTAELQTNYIGKGCDRETYSEKSLQKLCGASSGIIDLLPSPSAATNWTAGLLVDSSEMIFKFDGRQGAKIPDGIVPKNLTDQFTITMWMKHGPSPGVRAEKETILCNSDKTEMNRHHYALYVHNCRLVFLLRKDFDQADTFRPAEFHWKLDQICDKEWHYYVINVEFPVVTLYMDGATYEPYLVTNDWPIHPSHIAMQLTVGACWQGGEVAKPRFAQFFHGSLASLTIRPGKMESQKVISCLQACKEGLDINSLESLGRGIKYHFNPSQSILVMEGDDIGNINRALQKVSYINSRQFPTAGVRRLRLSSKVQCFGEDVCISIPDVDAYIMVLQAIEPQITLQGTERFWRPAAQFESARGVTLFPDIKIVSTFAKTEASGDMRATGTAPKSAVLEEMLHNLDFCDILVLGGDLDPRQECLELNHSELHQRHLDATNSTAGYSIYGVGSMNRYEQVLHHLRYRNWHPTSLETRRFRIKCSELNGRYTSNEFNLEVSVLHEVRVSDKEHVNHLIVQPPFLQSVHHPETRSSIQRSSVVPSIATVVIIISVCMLVFVVAMGVYRVRIAHQHFIQETEAAKEAEMDWDDSALTITVNPMEKHEGPGNGEDETTEVEEEEEAEEGSSSSSSGSDDSEEEEEEGMGRVRHGQSGTSSQSPERSTWNTAGVINIWK</sequence>
<dbReference type="EMBL" id="AJ278069">
    <property type="protein sequence ID" value="CAC14887.1"/>
    <property type="molecule type" value="mRNA"/>
</dbReference>
<dbReference type="EMBL" id="AK220500">
    <property type="protein sequence ID" value="BAD90297.1"/>
    <property type="status" value="ALT_INIT"/>
    <property type="molecule type" value="mRNA"/>
</dbReference>
<dbReference type="EMBL" id="BC063058">
    <property type="protein sequence ID" value="AAH63058.1"/>
    <property type="molecule type" value="mRNA"/>
</dbReference>
<dbReference type="EMBL" id="AK048369">
    <property type="protein sequence ID" value="BAC33313.1"/>
    <property type="molecule type" value="mRNA"/>
</dbReference>
<dbReference type="CCDS" id="CCDS40733.1">
    <molecule id="Q9ER65-1"/>
</dbReference>
<dbReference type="RefSeq" id="NP_001400335.1">
    <molecule id="Q9ER65-2"/>
    <property type="nucleotide sequence ID" value="NM_001413406.1"/>
</dbReference>
<dbReference type="RefSeq" id="NP_071714.2">
    <molecule id="Q9ER65-1"/>
    <property type="nucleotide sequence ID" value="NM_022319.2"/>
</dbReference>
<dbReference type="RefSeq" id="XP_006511397.1">
    <property type="nucleotide sequence ID" value="XM_006511334.3"/>
</dbReference>
<dbReference type="SMR" id="Q9ER65"/>
<dbReference type="FunCoup" id="Q9ER65">
    <property type="interactions" value="318"/>
</dbReference>
<dbReference type="STRING" id="10090.ENSMUSP00000035027"/>
<dbReference type="GlyConnect" id="2176">
    <property type="glycosylation" value="3 N-Linked glycans (2 sites)"/>
</dbReference>
<dbReference type="GlyCosmos" id="Q9ER65">
    <property type="glycosylation" value="6 sites, 3 glycans"/>
</dbReference>
<dbReference type="GlyGen" id="Q9ER65">
    <property type="glycosylation" value="6 sites, 5 N-linked glycans (3 sites)"/>
</dbReference>
<dbReference type="iPTMnet" id="Q9ER65"/>
<dbReference type="PhosphoSitePlus" id="Q9ER65"/>
<dbReference type="PaxDb" id="10090-ENSMUSP00000035027"/>
<dbReference type="PeptideAtlas" id="Q9ER65"/>
<dbReference type="ProteomicsDB" id="277909">
    <molecule id="Q9ER65-1"/>
</dbReference>
<dbReference type="ProteomicsDB" id="277910">
    <molecule id="Q9ER65-2"/>
</dbReference>
<dbReference type="Antibodypedia" id="33471">
    <property type="antibodies" value="129 antibodies from 20 providers"/>
</dbReference>
<dbReference type="DNASU" id="64085"/>
<dbReference type="Ensembl" id="ENSMUST00000035027.13">
    <molecule id="Q9ER65-1"/>
    <property type="protein sequence ID" value="ENSMUSP00000035027.7"/>
    <property type="gene ID" value="ENSMUSG00000032452.13"/>
</dbReference>
<dbReference type="Ensembl" id="ENSMUST00000162295.2">
    <molecule id="Q9ER65-2"/>
    <property type="protein sequence ID" value="ENSMUSP00000124081.2"/>
    <property type="gene ID" value="ENSMUSG00000032452.13"/>
</dbReference>
<dbReference type="GeneID" id="64085"/>
<dbReference type="KEGG" id="mmu:64085"/>
<dbReference type="UCSC" id="uc009rdd.1">
    <molecule id="Q9ER65-1"/>
    <property type="organism name" value="mouse"/>
</dbReference>
<dbReference type="UCSC" id="uc009rde.1">
    <molecule id="Q9ER65-2"/>
    <property type="organism name" value="mouse"/>
</dbReference>
<dbReference type="AGR" id="MGI:1929897"/>
<dbReference type="CTD" id="64084"/>
<dbReference type="MGI" id="MGI:1929897">
    <property type="gene designation" value="Clstn2"/>
</dbReference>
<dbReference type="VEuPathDB" id="HostDB:ENSMUSG00000032452"/>
<dbReference type="eggNOG" id="KOG1834">
    <property type="taxonomic scope" value="Eukaryota"/>
</dbReference>
<dbReference type="GeneTree" id="ENSGT00950000183086"/>
<dbReference type="HOGENOM" id="CLU_008904_0_0_1"/>
<dbReference type="InParanoid" id="Q9ER65"/>
<dbReference type="OMA" id="HMVIQPQ"/>
<dbReference type="OrthoDB" id="10012272at2759"/>
<dbReference type="PhylomeDB" id="Q9ER65"/>
<dbReference type="TreeFam" id="TF315946"/>
<dbReference type="BioGRID-ORCS" id="64085">
    <property type="hits" value="5 hits in 76 CRISPR screens"/>
</dbReference>
<dbReference type="ChiTaRS" id="Clstn2">
    <property type="organism name" value="mouse"/>
</dbReference>
<dbReference type="PRO" id="PR:Q9ER65"/>
<dbReference type="Proteomes" id="UP000000589">
    <property type="component" value="Chromosome 9"/>
</dbReference>
<dbReference type="RNAct" id="Q9ER65">
    <property type="molecule type" value="protein"/>
</dbReference>
<dbReference type="Bgee" id="ENSMUSG00000032452">
    <property type="expression patterns" value="Expressed in olfactory epithelium and 175 other cell types or tissues"/>
</dbReference>
<dbReference type="GO" id="GO:0009986">
    <property type="term" value="C:cell surface"/>
    <property type="evidence" value="ECO:0000314"/>
    <property type="project" value="MGI"/>
</dbReference>
<dbReference type="GO" id="GO:0030425">
    <property type="term" value="C:dendrite"/>
    <property type="evidence" value="ECO:0007669"/>
    <property type="project" value="UniProtKB-SubCell"/>
</dbReference>
<dbReference type="GO" id="GO:0005789">
    <property type="term" value="C:endoplasmic reticulum membrane"/>
    <property type="evidence" value="ECO:0007669"/>
    <property type="project" value="UniProtKB-SubCell"/>
</dbReference>
<dbReference type="GO" id="GO:0098978">
    <property type="term" value="C:glutamatergic synapse"/>
    <property type="evidence" value="ECO:0000314"/>
    <property type="project" value="SynGO"/>
</dbReference>
<dbReference type="GO" id="GO:0000139">
    <property type="term" value="C:Golgi membrane"/>
    <property type="evidence" value="ECO:0007669"/>
    <property type="project" value="UniProtKB-SubCell"/>
</dbReference>
<dbReference type="GO" id="GO:0014069">
    <property type="term" value="C:postsynaptic density"/>
    <property type="evidence" value="ECO:0000314"/>
    <property type="project" value="MGI"/>
</dbReference>
<dbReference type="GO" id="GO:0098839">
    <property type="term" value="C:postsynaptic density membrane"/>
    <property type="evidence" value="ECO:0000314"/>
    <property type="project" value="SynGO"/>
</dbReference>
<dbReference type="GO" id="GO:0045211">
    <property type="term" value="C:postsynaptic membrane"/>
    <property type="evidence" value="ECO:0000314"/>
    <property type="project" value="MGI"/>
</dbReference>
<dbReference type="GO" id="GO:0005509">
    <property type="term" value="F:calcium ion binding"/>
    <property type="evidence" value="ECO:0007669"/>
    <property type="project" value="InterPro"/>
</dbReference>
<dbReference type="GO" id="GO:0008306">
    <property type="term" value="P:associative learning"/>
    <property type="evidence" value="ECO:0000315"/>
    <property type="project" value="UniProtKB"/>
</dbReference>
<dbReference type="GO" id="GO:0007156">
    <property type="term" value="P:homophilic cell adhesion via plasma membrane adhesion molecules"/>
    <property type="evidence" value="ECO:0007669"/>
    <property type="project" value="InterPro"/>
</dbReference>
<dbReference type="GO" id="GO:1904862">
    <property type="term" value="P:inhibitory synapse assembly"/>
    <property type="evidence" value="ECO:0000315"/>
    <property type="project" value="UniProtKB"/>
</dbReference>
<dbReference type="GO" id="GO:0051965">
    <property type="term" value="P:positive regulation of synapse assembly"/>
    <property type="evidence" value="ECO:0000316"/>
    <property type="project" value="MGI"/>
</dbReference>
<dbReference type="GO" id="GO:0050806">
    <property type="term" value="P:positive regulation of synaptic transmission"/>
    <property type="evidence" value="ECO:0000316"/>
    <property type="project" value="MGI"/>
</dbReference>
<dbReference type="CDD" id="cd11304">
    <property type="entry name" value="Cadherin_repeat"/>
    <property type="match status" value="2"/>
</dbReference>
<dbReference type="FunFam" id="2.60.40.60:FF:000025">
    <property type="entry name" value="Calsyntenin 1"/>
    <property type="match status" value="1"/>
</dbReference>
<dbReference type="FunFam" id="2.60.120.200:FF:000029">
    <property type="entry name" value="Calsyntenin 2"/>
    <property type="match status" value="1"/>
</dbReference>
<dbReference type="FunFam" id="2.60.40.60:FF:000062">
    <property type="entry name" value="Calsyntenin 3"/>
    <property type="match status" value="1"/>
</dbReference>
<dbReference type="Gene3D" id="2.60.120.200">
    <property type="match status" value="1"/>
</dbReference>
<dbReference type="Gene3D" id="2.60.40.60">
    <property type="entry name" value="Cadherins"/>
    <property type="match status" value="2"/>
</dbReference>
<dbReference type="InterPro" id="IPR002126">
    <property type="entry name" value="Cadherin-like_dom"/>
</dbReference>
<dbReference type="InterPro" id="IPR015919">
    <property type="entry name" value="Cadherin-like_sf"/>
</dbReference>
<dbReference type="InterPro" id="IPR045588">
    <property type="entry name" value="CLSTN_C"/>
</dbReference>
<dbReference type="InterPro" id="IPR013320">
    <property type="entry name" value="ConA-like_dom_sf"/>
</dbReference>
<dbReference type="PANTHER" id="PTHR14139">
    <property type="entry name" value="CALSYNTENIN"/>
    <property type="match status" value="1"/>
</dbReference>
<dbReference type="PANTHER" id="PTHR14139:SF3">
    <property type="entry name" value="CALSYNTENIN-2"/>
    <property type="match status" value="1"/>
</dbReference>
<dbReference type="Pfam" id="PF00028">
    <property type="entry name" value="Cadherin"/>
    <property type="match status" value="1"/>
</dbReference>
<dbReference type="Pfam" id="PF19699">
    <property type="entry name" value="CLSTN_C"/>
    <property type="match status" value="1"/>
</dbReference>
<dbReference type="PRINTS" id="PR00205">
    <property type="entry name" value="CADHERIN"/>
</dbReference>
<dbReference type="SMART" id="SM00112">
    <property type="entry name" value="CA"/>
    <property type="match status" value="2"/>
</dbReference>
<dbReference type="SUPFAM" id="SSF49313">
    <property type="entry name" value="Cadherin-like"/>
    <property type="match status" value="2"/>
</dbReference>
<dbReference type="SUPFAM" id="SSF49899">
    <property type="entry name" value="Concanavalin A-like lectins/glucanases"/>
    <property type="match status" value="1"/>
</dbReference>
<dbReference type="PROSITE" id="PS50268">
    <property type="entry name" value="CADHERIN_2"/>
    <property type="match status" value="2"/>
</dbReference>
<accession>Q9ER65</accession>
<accession>Q5DTM0</accession>
<accession>Q6P565</accession>
<accession>Q8C858</accession>
<keyword id="KW-0025">Alternative splicing</keyword>
<keyword id="KW-0106">Calcium</keyword>
<keyword id="KW-0130">Cell adhesion</keyword>
<keyword id="KW-1003">Cell membrane</keyword>
<keyword id="KW-0966">Cell projection</keyword>
<keyword id="KW-0256">Endoplasmic reticulum</keyword>
<keyword id="KW-0325">Glycoprotein</keyword>
<keyword id="KW-0333">Golgi apparatus</keyword>
<keyword id="KW-0472">Membrane</keyword>
<keyword id="KW-0628">Postsynaptic cell membrane</keyword>
<keyword id="KW-1185">Reference proteome</keyword>
<keyword id="KW-0677">Repeat</keyword>
<keyword id="KW-0732">Signal</keyword>
<keyword id="KW-0770">Synapse</keyword>
<keyword id="KW-0812">Transmembrane</keyword>
<keyword id="KW-1133">Transmembrane helix</keyword>
<protein>
    <recommendedName>
        <fullName evidence="13">Calsyntenin-2</fullName>
    </recommendedName>
</protein>
<organism>
    <name type="scientific">Mus musculus</name>
    <name type="common">Mouse</name>
    <dbReference type="NCBI Taxonomy" id="10090"/>
    <lineage>
        <taxon>Eukaryota</taxon>
        <taxon>Metazoa</taxon>
        <taxon>Chordata</taxon>
        <taxon>Craniata</taxon>
        <taxon>Vertebrata</taxon>
        <taxon>Euteleostomi</taxon>
        <taxon>Mammalia</taxon>
        <taxon>Eutheria</taxon>
        <taxon>Euarchontoglires</taxon>
        <taxon>Glires</taxon>
        <taxon>Rodentia</taxon>
        <taxon>Myomorpha</taxon>
        <taxon>Muroidea</taxon>
        <taxon>Muridae</taxon>
        <taxon>Murinae</taxon>
        <taxon>Mus</taxon>
        <taxon>Mus</taxon>
    </lineage>
</organism>
<gene>
    <name evidence="15 18" type="primary">Clstn2</name>
    <name type="synonym">Cs2</name>
    <name type="synonym">Cstn2</name>
    <name evidence="16" type="synonym">Kiaa4134</name>
</gene>
<evidence type="ECO:0000250" key="1">
    <source>
        <dbReference type="UniProtKB" id="Q99JH7"/>
    </source>
</evidence>
<evidence type="ECO:0000250" key="2">
    <source>
        <dbReference type="UniProtKB" id="Q9EPL2"/>
    </source>
</evidence>
<evidence type="ECO:0000250" key="3">
    <source>
        <dbReference type="UniProtKB" id="Q9H4D0"/>
    </source>
</evidence>
<evidence type="ECO:0000255" key="4"/>
<evidence type="ECO:0000255" key="5">
    <source>
        <dbReference type="PROSITE-ProRule" id="PRU00043"/>
    </source>
</evidence>
<evidence type="ECO:0000256" key="6">
    <source>
        <dbReference type="SAM" id="MobiDB-lite"/>
    </source>
</evidence>
<evidence type="ECO:0000269" key="7">
    <source>
    </source>
</evidence>
<evidence type="ECO:0000269" key="8">
    <source>
    </source>
</evidence>
<evidence type="ECO:0000269" key="9">
    <source>
    </source>
</evidence>
<evidence type="ECO:0000269" key="10">
    <source>
    </source>
</evidence>
<evidence type="ECO:0000269" key="11">
    <source>
    </source>
</evidence>
<evidence type="ECO:0000269" key="12">
    <source>
    </source>
</evidence>
<evidence type="ECO:0000303" key="13">
    <source>
    </source>
</evidence>
<evidence type="ECO:0000303" key="14">
    <source>
    </source>
</evidence>
<evidence type="ECO:0000303" key="15">
    <source>
    </source>
</evidence>
<evidence type="ECO:0000303" key="16">
    <source ref="2"/>
</evidence>
<evidence type="ECO:0000305" key="17"/>
<evidence type="ECO:0000312" key="18">
    <source>
        <dbReference type="MGI" id="MGI:1929897"/>
    </source>
</evidence>
<feature type="signal peptide" evidence="4">
    <location>
        <begin position="1"/>
        <end position="20"/>
    </location>
</feature>
<feature type="chain" id="PRO_0000004024" description="Calsyntenin-2">
    <location>
        <begin position="21"/>
        <end position="966"/>
    </location>
</feature>
<feature type="topological domain" description="Extracellular" evidence="4">
    <location>
        <begin position="21"/>
        <end position="835"/>
    </location>
</feature>
<feature type="transmembrane region" description="Helical" evidence="4">
    <location>
        <begin position="836"/>
        <end position="856"/>
    </location>
</feature>
<feature type="topological domain" description="Cytoplasmic" evidence="4">
    <location>
        <begin position="857"/>
        <end position="966"/>
    </location>
</feature>
<feature type="domain" description="Cadherin 1" evidence="5">
    <location>
        <begin position="46"/>
        <end position="162"/>
    </location>
</feature>
<feature type="domain" description="Cadherin 2" evidence="5">
    <location>
        <begin position="163"/>
        <end position="282"/>
    </location>
</feature>
<feature type="region of interest" description="Disordered" evidence="6">
    <location>
        <begin position="890"/>
        <end position="966"/>
    </location>
</feature>
<feature type="compositionally biased region" description="Acidic residues" evidence="6">
    <location>
        <begin position="901"/>
        <end position="916"/>
    </location>
</feature>
<feature type="compositionally biased region" description="Polar residues" evidence="6">
    <location>
        <begin position="943"/>
        <end position="960"/>
    </location>
</feature>
<feature type="glycosylation site" description="N-linked (GlcNAc...) asparagine" evidence="4">
    <location>
        <position position="58"/>
    </location>
</feature>
<feature type="glycosylation site" description="N-linked (GlcNAc...) asparagine" evidence="4">
    <location>
        <position position="100"/>
    </location>
</feature>
<feature type="glycosylation site" description="N-linked (GlcNAc...) asparagine" evidence="4">
    <location>
        <position position="344"/>
    </location>
</feature>
<feature type="glycosylation site" description="N-linked (GlcNAc...) asparagine" evidence="4">
    <location>
        <position position="376"/>
    </location>
</feature>
<feature type="glycosylation site" description="N-linked (GlcNAc...) asparagine" evidence="4">
    <location>
        <position position="720"/>
    </location>
</feature>
<feature type="glycosylation site" description="N-linked (GlcNAc...) asparagine" evidence="4">
    <location>
        <position position="733"/>
    </location>
</feature>
<feature type="splice variant" id="VSP_032037" description="In isoform 2." evidence="14">
    <original>SSQSPERSTWNTAGVINIWK</original>
    <variation>RQAQLEWDDSTLPY</variation>
    <location>
        <begin position="947"/>
        <end position="966"/>
    </location>
</feature>
<feature type="sequence conflict" description="In Ref. 2; BAD90297." evidence="17" ref="2">
    <original>A</original>
    <variation>G</variation>
    <location>
        <position position="342"/>
    </location>
</feature>
<feature type="sequence conflict" description="In Ref. 1; CAC14887." evidence="17" ref="1">
    <original>N</original>
    <variation>H</variation>
    <location>
        <position position="900"/>
    </location>
</feature>
<feature type="sequence conflict" description="In Ref. 1; CAC14887." evidence="17" ref="1">
    <original>V</original>
    <variation>G</variation>
    <location>
        <position position="908"/>
    </location>
</feature>
<reference key="1">
    <citation type="journal article" date="2002" name="Mol. Cell. Neurosci.">
        <title>The calsyntenins - a family of postsynaptic membrane proteins with distinct neuronal expression patterns.</title>
        <authorList>
            <person name="Hintsch G."/>
            <person name="Zurlinden A."/>
            <person name="Meskenaite V."/>
            <person name="Steuble M."/>
            <person name="Fink-Widmer K."/>
            <person name="Kinter J."/>
            <person name="Sonderegger P."/>
        </authorList>
    </citation>
    <scope>NUCLEOTIDE SEQUENCE [MRNA] (ISOFORM 1)</scope>
    <scope>SUBCELLULAR LOCATION</scope>
    <scope>TISSUE SPECIFICITY</scope>
    <source>
        <tissue>Brain</tissue>
    </source>
</reference>
<reference key="2">
    <citation type="submission" date="2005-02" db="EMBL/GenBank/DDBJ databases">
        <title>Prediction of the coding sequences of mouse homologues of KIAA gene. The complete nucleotide sequences of mouse KIAA-homologous cDNAs identified by screening of terminal sequences of cDNA clones randomly sampled from size-fractionated libraries.</title>
        <authorList>
            <person name="Okazaki N."/>
            <person name="Kikuno R.F."/>
            <person name="Ohara R."/>
            <person name="Inamoto S."/>
            <person name="Nagase T."/>
            <person name="Ohara O."/>
            <person name="Koga H."/>
        </authorList>
    </citation>
    <scope>NUCLEOTIDE SEQUENCE [LARGE SCALE MRNA] (ISOFORM 1)</scope>
    <source>
        <tissue>Fetal brain</tissue>
    </source>
</reference>
<reference key="3">
    <citation type="journal article" date="2004" name="Genome Res.">
        <title>The status, quality, and expansion of the NIH full-length cDNA project: the Mammalian Gene Collection (MGC).</title>
        <authorList>
            <consortium name="The MGC Project Team"/>
        </authorList>
    </citation>
    <scope>NUCLEOTIDE SEQUENCE [LARGE SCALE MRNA] (ISOFORM 1)</scope>
    <source>
        <strain>C57BL/6J</strain>
        <tissue>Embryonic brain</tissue>
    </source>
</reference>
<reference key="4">
    <citation type="journal article" date="2005" name="Science">
        <title>The transcriptional landscape of the mammalian genome.</title>
        <authorList>
            <person name="Carninci P."/>
            <person name="Kasukawa T."/>
            <person name="Katayama S."/>
            <person name="Gough J."/>
            <person name="Frith M.C."/>
            <person name="Maeda N."/>
            <person name="Oyama R."/>
            <person name="Ravasi T."/>
            <person name="Lenhard B."/>
            <person name="Wells C."/>
            <person name="Kodzius R."/>
            <person name="Shimokawa K."/>
            <person name="Bajic V.B."/>
            <person name="Brenner S.E."/>
            <person name="Batalov S."/>
            <person name="Forrest A.R."/>
            <person name="Zavolan M."/>
            <person name="Davis M.J."/>
            <person name="Wilming L.G."/>
            <person name="Aidinis V."/>
            <person name="Allen J.E."/>
            <person name="Ambesi-Impiombato A."/>
            <person name="Apweiler R."/>
            <person name="Aturaliya R.N."/>
            <person name="Bailey T.L."/>
            <person name="Bansal M."/>
            <person name="Baxter L."/>
            <person name="Beisel K.W."/>
            <person name="Bersano T."/>
            <person name="Bono H."/>
            <person name="Chalk A.M."/>
            <person name="Chiu K.P."/>
            <person name="Choudhary V."/>
            <person name="Christoffels A."/>
            <person name="Clutterbuck D.R."/>
            <person name="Crowe M.L."/>
            <person name="Dalla E."/>
            <person name="Dalrymple B.P."/>
            <person name="de Bono B."/>
            <person name="Della Gatta G."/>
            <person name="di Bernardo D."/>
            <person name="Down T."/>
            <person name="Engstrom P."/>
            <person name="Fagiolini M."/>
            <person name="Faulkner G."/>
            <person name="Fletcher C.F."/>
            <person name="Fukushima T."/>
            <person name="Furuno M."/>
            <person name="Futaki S."/>
            <person name="Gariboldi M."/>
            <person name="Georgii-Hemming P."/>
            <person name="Gingeras T.R."/>
            <person name="Gojobori T."/>
            <person name="Green R.E."/>
            <person name="Gustincich S."/>
            <person name="Harbers M."/>
            <person name="Hayashi Y."/>
            <person name="Hensch T.K."/>
            <person name="Hirokawa N."/>
            <person name="Hill D."/>
            <person name="Huminiecki L."/>
            <person name="Iacono M."/>
            <person name="Ikeo K."/>
            <person name="Iwama A."/>
            <person name="Ishikawa T."/>
            <person name="Jakt M."/>
            <person name="Kanapin A."/>
            <person name="Katoh M."/>
            <person name="Kawasawa Y."/>
            <person name="Kelso J."/>
            <person name="Kitamura H."/>
            <person name="Kitano H."/>
            <person name="Kollias G."/>
            <person name="Krishnan S.P."/>
            <person name="Kruger A."/>
            <person name="Kummerfeld S.K."/>
            <person name="Kurochkin I.V."/>
            <person name="Lareau L.F."/>
            <person name="Lazarevic D."/>
            <person name="Lipovich L."/>
            <person name="Liu J."/>
            <person name="Liuni S."/>
            <person name="McWilliam S."/>
            <person name="Madan Babu M."/>
            <person name="Madera M."/>
            <person name="Marchionni L."/>
            <person name="Matsuda H."/>
            <person name="Matsuzawa S."/>
            <person name="Miki H."/>
            <person name="Mignone F."/>
            <person name="Miyake S."/>
            <person name="Morris K."/>
            <person name="Mottagui-Tabar S."/>
            <person name="Mulder N."/>
            <person name="Nakano N."/>
            <person name="Nakauchi H."/>
            <person name="Ng P."/>
            <person name="Nilsson R."/>
            <person name="Nishiguchi S."/>
            <person name="Nishikawa S."/>
            <person name="Nori F."/>
            <person name="Ohara O."/>
            <person name="Okazaki Y."/>
            <person name="Orlando V."/>
            <person name="Pang K.C."/>
            <person name="Pavan W.J."/>
            <person name="Pavesi G."/>
            <person name="Pesole G."/>
            <person name="Petrovsky N."/>
            <person name="Piazza S."/>
            <person name="Reed J."/>
            <person name="Reid J.F."/>
            <person name="Ring B.Z."/>
            <person name="Ringwald M."/>
            <person name="Rost B."/>
            <person name="Ruan Y."/>
            <person name="Salzberg S.L."/>
            <person name="Sandelin A."/>
            <person name="Schneider C."/>
            <person name="Schoenbach C."/>
            <person name="Sekiguchi K."/>
            <person name="Semple C.A."/>
            <person name="Seno S."/>
            <person name="Sessa L."/>
            <person name="Sheng Y."/>
            <person name="Shibata Y."/>
            <person name="Shimada H."/>
            <person name="Shimada K."/>
            <person name="Silva D."/>
            <person name="Sinclair B."/>
            <person name="Sperling S."/>
            <person name="Stupka E."/>
            <person name="Sugiura K."/>
            <person name="Sultana R."/>
            <person name="Takenaka Y."/>
            <person name="Taki K."/>
            <person name="Tammoja K."/>
            <person name="Tan S.L."/>
            <person name="Tang S."/>
            <person name="Taylor M.S."/>
            <person name="Tegner J."/>
            <person name="Teichmann S.A."/>
            <person name="Ueda H.R."/>
            <person name="van Nimwegen E."/>
            <person name="Verardo R."/>
            <person name="Wei C.L."/>
            <person name="Yagi K."/>
            <person name="Yamanishi H."/>
            <person name="Zabarovsky E."/>
            <person name="Zhu S."/>
            <person name="Zimmer A."/>
            <person name="Hide W."/>
            <person name="Bult C."/>
            <person name="Grimmond S.M."/>
            <person name="Teasdale R.D."/>
            <person name="Liu E.T."/>
            <person name="Brusic V."/>
            <person name="Quackenbush J."/>
            <person name="Wahlestedt C."/>
            <person name="Mattick J.S."/>
            <person name="Hume D.A."/>
            <person name="Kai C."/>
            <person name="Sasaki D."/>
            <person name="Tomaru Y."/>
            <person name="Fukuda S."/>
            <person name="Kanamori-Katayama M."/>
            <person name="Suzuki M."/>
            <person name="Aoki J."/>
            <person name="Arakawa T."/>
            <person name="Iida J."/>
            <person name="Imamura K."/>
            <person name="Itoh M."/>
            <person name="Kato T."/>
            <person name="Kawaji H."/>
            <person name="Kawagashira N."/>
            <person name="Kawashima T."/>
            <person name="Kojima M."/>
            <person name="Kondo S."/>
            <person name="Konno H."/>
            <person name="Nakano K."/>
            <person name="Ninomiya N."/>
            <person name="Nishio T."/>
            <person name="Okada M."/>
            <person name="Plessy C."/>
            <person name="Shibata K."/>
            <person name="Shiraki T."/>
            <person name="Suzuki S."/>
            <person name="Tagami M."/>
            <person name="Waki K."/>
            <person name="Watahiki A."/>
            <person name="Okamura-Oho Y."/>
            <person name="Suzuki H."/>
            <person name="Kawai J."/>
            <person name="Hayashizaki Y."/>
        </authorList>
    </citation>
    <scope>NUCLEOTIDE SEQUENCE [LARGE SCALE MRNA] OF 426-966 (ISOFORM 2)</scope>
    <source>
        <strain>C57BL/6J</strain>
        <tissue>Embryonic head</tissue>
    </source>
</reference>
<reference key="5">
    <citation type="journal article" date="2014" name="Cell Rep.">
        <title>Calsyntenins function as synaptogenic adhesion molecules in concert with neurexins.</title>
        <authorList>
            <person name="Um J.W."/>
            <person name="Pramanik G."/>
            <person name="Ko J.S."/>
            <person name="Song M.Y."/>
            <person name="Lee D."/>
            <person name="Kim H."/>
            <person name="Park K.S."/>
            <person name="Suedhof T.C."/>
            <person name="Tabuchi K."/>
            <person name="Ko J."/>
        </authorList>
    </citation>
    <scope>FUNCTION</scope>
    <scope>SUBCELLULAR LOCATION</scope>
</reference>
<reference key="6">
    <citation type="journal article" date="2016" name="Neuropsychopharmacology">
        <title>Cognitive deficits in calsyntenin-2-deficient mice associated with reduced GABAergic transmission.</title>
        <authorList>
            <person name="Lipina T.V."/>
            <person name="Prasad T."/>
            <person name="Yokomaku D."/>
            <person name="Luo L."/>
            <person name="Connor S.A."/>
            <person name="Kawabe H."/>
            <person name="Wang Y.T."/>
            <person name="Brose N."/>
            <person name="Roder J.C."/>
            <person name="Craig A.M."/>
        </authorList>
    </citation>
    <scope>FUNCTION</scope>
    <scope>DISRUPTION PHENOTYPE</scope>
</reference>
<reference key="7">
    <citation type="journal article" date="2017" name="Behav. Brain Res.">
        <title>Features of emotional and social behavioral phenotypes of calsyntenin2 knockout mice.</title>
        <authorList>
            <person name="Ranneva S.V."/>
            <person name="Pavlov K.S."/>
            <person name="Gromova A.V."/>
            <person name="Amstislavskaya T.G."/>
            <person name="Lipina T.V."/>
        </authorList>
    </citation>
    <scope>DISRUPTION PHENOTYPE</scope>
</reference>
<reference key="8">
    <citation type="journal article" date="2020" name="Synapse">
        <title>Lack of synaptic protein, calsyntenin-2, impairs morphology of synaptic complexes in mice.</title>
        <authorList>
            <person name="Ranneva S.V."/>
            <person name="Maksimov V.F."/>
            <person name="Korostyshevskaja I.M."/>
            <person name="Lipina T.V."/>
        </authorList>
    </citation>
    <scope>FUNCTION</scope>
    <scope>DISRUPTION PHENOTYPE</scope>
</reference>
<reference key="9">
    <citation type="journal article" date="2022" name="Mol. Brain">
        <title>Loss of calsyntenin paralogs disrupts interneuron stability and mouse behavior.</title>
        <authorList>
            <person name="Mori K."/>
            <person name="Koebis M."/>
            <person name="Nakao K."/>
            <person name="Kobayashi S."/>
            <person name="Kiyama Y."/>
            <person name="Watanabe M."/>
            <person name="Manabe T."/>
            <person name="Iino Y."/>
            <person name="Aiba A."/>
        </authorList>
    </citation>
    <scope>DISRUPTION PHENOTYPE</scope>
</reference>
<proteinExistence type="evidence at protein level"/>
<name>CSTN2_MOUSE</name>